<gene>
    <name evidence="5" type="ORF">crAss001_46</name>
</gene>
<sequence length="534" mass="60211">MANFSFVSGAKFRPFSYQEMLQPLQAYTQEYNTIQEGMGELGTKADVFERMANEQTDPQAYAMYKQYSNDLAAQAESLAKQGLTPASRQGLIDMKRRYSSEIVPIEQAYKRRQELVDEQRKLQAQDSTLLFDRPASTLSLDELISNPALSPQSYSGALLSKQVGTAAQNLAKEVRENPRKWRTILGNQYYETIMQKGFRPEEIMQAVQNNPEASPILQGIVEDAVGSSGIRNWNDENILNRAYDYARQGLWNAVGETQYQTLSNKAYDYAMQERLAAAKKGKTEGTPSAVFRSVPKTKVDGDKKTTELNDELQFIQQLRANPSMINEEVERVNPGYPTQYGVNVGGGIYKVKPHAERLQQIIKKYDMKDGNMDQLEQKLQADIRSSAVRDFIYKPNITQSDLISQVIKENARTLGAATESTGLYELDDNRKGDPIKLKNISDYFTGDNDISYDPEVGLIINATKDGKTKSAVIDPELIDDADRSVAGYMNNINVLLENGYDVEAQRYINTMMNYIYGKFNTLAKRQSNTDSKLE</sequence>
<proteinExistence type="evidence at protein level"/>
<protein>
    <recommendedName>
        <fullName evidence="3">Cargo protein 2</fullName>
    </recommendedName>
    <alternativeName>
        <fullName evidence="2">Gene product 46</fullName>
        <shortName evidence="2">gp46</shortName>
    </alternativeName>
</protein>
<name>CARG2_BPCA1</name>
<keyword id="KW-1185">Reference proteome</keyword>
<keyword id="KW-1171">Viral genome ejection through host cell envelope</keyword>
<keyword id="KW-1162">Viral penetration into host cytoplasm</keyword>
<keyword id="KW-0946">Virion</keyword>
<keyword id="KW-1160">Virus entry into host cell</keyword>
<organismHost>
    <name type="scientific">Bacteroides intestinalis</name>
    <dbReference type="NCBI Taxonomy" id="329854"/>
</organismHost>
<accession>A0A385DVT8</accession>
<feature type="chain" id="PRO_0000458038" description="Cargo protein 2">
    <location>
        <begin position="1"/>
        <end position="534"/>
    </location>
</feature>
<dbReference type="EMBL" id="MH675552">
    <property type="protein sequence ID" value="AXQ62689.1"/>
    <property type="molecule type" value="Genomic_DNA"/>
</dbReference>
<dbReference type="SMR" id="A0A385DVT8"/>
<dbReference type="Proteomes" id="UP000262320">
    <property type="component" value="Genome"/>
</dbReference>
<dbReference type="GO" id="GO:0044423">
    <property type="term" value="C:virion component"/>
    <property type="evidence" value="ECO:0007669"/>
    <property type="project" value="UniProtKB-KW"/>
</dbReference>
<dbReference type="GO" id="GO:0046718">
    <property type="term" value="P:symbiont entry into host cell"/>
    <property type="evidence" value="ECO:0007669"/>
    <property type="project" value="UniProtKB-KW"/>
</dbReference>
<comment type="function">
    <text evidence="1">Protein that is stored in high quantity in the viral capsid and may play a role during ejection.</text>
</comment>
<comment type="subunit">
    <text evidence="1 4">Homododecamer (PubMed:37138077). Localizes inside the capsid (Probable).</text>
</comment>
<comment type="subcellular location">
    <subcellularLocation>
        <location>Virion</location>
    </subcellularLocation>
    <text evidence="1">Present in 12 copies in the virion.</text>
</comment>
<reference key="1">
    <citation type="journal article" date="2018" name="Nat. Commun.">
        <title>PhiCrAss001 represents the most abundant bacteriophage family in the human gut and infects Bacteroides intestinalis.</title>
        <authorList>
            <person name="Shkoporov A.N."/>
            <person name="Khokhlova E.V."/>
            <person name="Fitzgerald C.B."/>
            <person name="Stockdale S.R."/>
            <person name="Draper L.A."/>
            <person name="Ross R.P."/>
            <person name="Hill C."/>
        </authorList>
    </citation>
    <scope>NUCLEOTIDE SEQUENCE [LARGE SCALE GENOMIC DNA]</scope>
</reference>
<reference key="2">
    <citation type="journal article" date="2023" name="Nature">
        <title>Structural atlas of a human gut crassvirus.</title>
        <authorList>
            <person name="Bayfield O.W."/>
            <person name="Shkoporov A.N."/>
            <person name="Yutin N."/>
            <person name="Khokhlova E.V."/>
            <person name="Smith J.L.R."/>
            <person name="Hawkins D.E.D.P."/>
            <person name="Koonin E.V."/>
            <person name="Hill C."/>
            <person name="Antson A.A."/>
        </authorList>
    </citation>
    <scope>SUBCELLULAR LOCATION</scope>
    <scope>FUNCTION</scope>
    <scope>SUBUNIT</scope>
</reference>
<evidence type="ECO:0000269" key="1">
    <source>
    </source>
</evidence>
<evidence type="ECO:0000303" key="2">
    <source>
    </source>
</evidence>
<evidence type="ECO:0000303" key="3">
    <source>
    </source>
</evidence>
<evidence type="ECO:0000305" key="4">
    <source>
    </source>
</evidence>
<evidence type="ECO:0000312" key="5">
    <source>
        <dbReference type="EMBL" id="AXQ62689.1"/>
    </source>
</evidence>
<organism>
    <name type="scientific">Bacteroides phage crAss001</name>
    <name type="common">Bacteroides phage PhiCrAss001</name>
    <dbReference type="NCBI Taxonomy" id="2301731"/>
    <lineage>
        <taxon>Viruses</taxon>
        <taxon>Duplodnaviria</taxon>
        <taxon>Heunggongvirae</taxon>
        <taxon>Uroviricota</taxon>
        <taxon>Caudoviricetes</taxon>
        <taxon>Crassvirales</taxon>
        <taxon>Steigviridae</taxon>
        <taxon>Asinivirinae</taxon>
        <taxon>Kehishuvirus</taxon>
        <taxon>Kehishuvirus primarius</taxon>
    </lineage>
</organism>